<feature type="chain" id="PRO_0000080802" description="Putative phosphate permease Mb2302">
    <location>
        <begin position="1"/>
        <end position="552"/>
    </location>
</feature>
<feature type="transmembrane region" description="Helical" evidence="1">
    <location>
        <begin position="38"/>
        <end position="58"/>
    </location>
</feature>
<feature type="transmembrane region" description="Helical" evidence="1">
    <location>
        <begin position="69"/>
        <end position="89"/>
    </location>
</feature>
<feature type="transmembrane region" description="Helical" evidence="1">
    <location>
        <begin position="107"/>
        <end position="127"/>
    </location>
</feature>
<feature type="transmembrane region" description="Helical" evidence="1">
    <location>
        <begin position="146"/>
        <end position="166"/>
    </location>
</feature>
<feature type="transmembrane region" description="Helical" evidence="1">
    <location>
        <begin position="178"/>
        <end position="198"/>
    </location>
</feature>
<feature type="transmembrane region" description="Helical" evidence="1">
    <location>
        <begin position="213"/>
        <end position="233"/>
    </location>
</feature>
<feature type="transmembrane region" description="Helical" evidence="1">
    <location>
        <begin position="326"/>
        <end position="346"/>
    </location>
</feature>
<feature type="transmembrane region" description="Helical" evidence="1">
    <location>
        <begin position="360"/>
        <end position="380"/>
    </location>
</feature>
<feature type="transmembrane region" description="Helical" evidence="1">
    <location>
        <begin position="389"/>
        <end position="409"/>
    </location>
</feature>
<feature type="transmembrane region" description="Helical" evidence="1">
    <location>
        <begin position="437"/>
        <end position="457"/>
    </location>
</feature>
<feature type="transmembrane region" description="Helical" evidence="1">
    <location>
        <begin position="472"/>
        <end position="492"/>
    </location>
</feature>
<feature type="transmembrane region" description="Helical" evidence="1">
    <location>
        <begin position="493"/>
        <end position="513"/>
    </location>
</feature>
<feature type="transmembrane region" description="Helical" evidence="1">
    <location>
        <begin position="526"/>
        <end position="546"/>
    </location>
</feature>
<protein>
    <recommendedName>
        <fullName>Putative phosphate permease Mb2302</fullName>
    </recommendedName>
</protein>
<dbReference type="EMBL" id="LT708304">
    <property type="protein sequence ID" value="SIU00914.1"/>
    <property type="molecule type" value="Genomic_DNA"/>
</dbReference>
<dbReference type="RefSeq" id="NP_855951.1">
    <property type="nucleotide sequence ID" value="NC_002945.3"/>
</dbReference>
<dbReference type="RefSeq" id="WP_003411694.1">
    <property type="nucleotide sequence ID" value="NC_002945.4"/>
</dbReference>
<dbReference type="SMR" id="P65713"/>
<dbReference type="KEGG" id="mbo:BQ2027_MB2302"/>
<dbReference type="PATRIC" id="fig|233413.5.peg.2527"/>
<dbReference type="Proteomes" id="UP000001419">
    <property type="component" value="Chromosome"/>
</dbReference>
<dbReference type="GO" id="GO:0005886">
    <property type="term" value="C:plasma membrane"/>
    <property type="evidence" value="ECO:0007669"/>
    <property type="project" value="UniProtKB-SubCell"/>
</dbReference>
<dbReference type="GO" id="GO:0005315">
    <property type="term" value="F:phosphate transmembrane transporter activity"/>
    <property type="evidence" value="ECO:0007669"/>
    <property type="project" value="InterPro"/>
</dbReference>
<dbReference type="GO" id="GO:0035435">
    <property type="term" value="P:phosphate ion transmembrane transport"/>
    <property type="evidence" value="ECO:0007669"/>
    <property type="project" value="TreeGrafter"/>
</dbReference>
<dbReference type="InterPro" id="IPR001204">
    <property type="entry name" value="Phos_transporter"/>
</dbReference>
<dbReference type="PANTHER" id="PTHR11101">
    <property type="entry name" value="PHOSPHATE TRANSPORTER"/>
    <property type="match status" value="1"/>
</dbReference>
<dbReference type="PANTHER" id="PTHR11101:SF80">
    <property type="entry name" value="PHOSPHATE TRANSPORTER"/>
    <property type="match status" value="1"/>
</dbReference>
<dbReference type="Pfam" id="PF01384">
    <property type="entry name" value="PHO4"/>
    <property type="match status" value="1"/>
</dbReference>
<organism>
    <name type="scientific">Mycobacterium bovis (strain ATCC BAA-935 / AF2122/97)</name>
    <dbReference type="NCBI Taxonomy" id="233413"/>
    <lineage>
        <taxon>Bacteria</taxon>
        <taxon>Bacillati</taxon>
        <taxon>Actinomycetota</taxon>
        <taxon>Actinomycetes</taxon>
        <taxon>Mycobacteriales</taxon>
        <taxon>Mycobacteriaceae</taxon>
        <taxon>Mycobacterium</taxon>
        <taxon>Mycobacterium tuberculosis complex</taxon>
    </lineage>
</organism>
<name>Y2302_MYCBO</name>
<reference key="1">
    <citation type="journal article" date="2003" name="Proc. Natl. Acad. Sci. U.S.A.">
        <title>The complete genome sequence of Mycobacterium bovis.</title>
        <authorList>
            <person name="Garnier T."/>
            <person name="Eiglmeier K."/>
            <person name="Camus J.-C."/>
            <person name="Medina N."/>
            <person name="Mansoor H."/>
            <person name="Pryor M."/>
            <person name="Duthoy S."/>
            <person name="Grondin S."/>
            <person name="Lacroix C."/>
            <person name="Monsempe C."/>
            <person name="Simon S."/>
            <person name="Harris B."/>
            <person name="Atkin R."/>
            <person name="Doggett J."/>
            <person name="Mayes R."/>
            <person name="Keating L."/>
            <person name="Wheeler P.R."/>
            <person name="Parkhill J."/>
            <person name="Barrell B.G."/>
            <person name="Cole S.T."/>
            <person name="Gordon S.V."/>
            <person name="Hewinson R.G."/>
        </authorList>
    </citation>
    <scope>NUCLEOTIDE SEQUENCE [LARGE SCALE GENOMIC DNA]</scope>
    <source>
        <strain>ATCC BAA-935 / AF2122/97</strain>
    </source>
</reference>
<reference key="2">
    <citation type="journal article" date="2017" name="Genome Announc.">
        <title>Updated reference genome sequence and annotation of Mycobacterium bovis AF2122/97.</title>
        <authorList>
            <person name="Malone K.M."/>
            <person name="Farrell D."/>
            <person name="Stuber T.P."/>
            <person name="Schubert O.T."/>
            <person name="Aebersold R."/>
            <person name="Robbe-Austerman S."/>
            <person name="Gordon S.V."/>
        </authorList>
    </citation>
    <scope>NUCLEOTIDE SEQUENCE [LARGE SCALE GENOMIC DNA]</scope>
    <scope>GENOME REANNOTATION</scope>
    <source>
        <strain>ATCC BAA-935 / AF2122/97</strain>
    </source>
</reference>
<comment type="function">
    <text>Potential transporter for phosphate.</text>
</comment>
<comment type="subcellular location">
    <subcellularLocation>
        <location evidence="2">Cell membrane</location>
        <topology evidence="2">Multi-pass membrane protein</topology>
    </subcellularLocation>
</comment>
<comment type="similarity">
    <text evidence="2">Belongs to the inorganic phosphate transporter (PiT) (TC 2.A.20) family.</text>
</comment>
<evidence type="ECO:0000255" key="1"/>
<evidence type="ECO:0000305" key="2"/>
<keyword id="KW-1003">Cell membrane</keyword>
<keyword id="KW-0472">Membrane</keyword>
<keyword id="KW-0592">Phosphate transport</keyword>
<keyword id="KW-1185">Reference proteome</keyword>
<keyword id="KW-0812">Transmembrane</keyword>
<keyword id="KW-1133">Transmembrane helix</keyword>
<keyword id="KW-0813">Transport</keyword>
<accession>P65713</accession>
<accession>A0A1R3Y2W6</accession>
<accession>Q50684</accession>
<accession>X2BK88</accession>
<sequence>MSDNAKHHRDGHLVASGLQDRAARTPQHEGFLGPDRPWHLSFSLLLAGSFVLFSWWAFDYAGSGANKVILVLATVVGMFMAFNVGGNDVANSFGTSVGAGTLTMKQALLVAAIFEVSGAVIAGGDVTETIRSGIVDLSGVSVDPRDFMNIMLSALSAAALWLLFANRMGYPVSTTHSIIGGIVGAAIALGMVSGQGGAALRMVQWDQIGQIVVSWVLSPVLGGLVSYLLYGVIKRHILLYNEQAERRLTEIKKERIAHRERHKAAFDRLTEIQQIAYTGALARDAVAANRKDFDPDELESDYYRELHEIDAKTSSVDAFRALQNWVPLVAAAGSMIIVAMLLFKGFKHMHLGLTTMNNYFIIAMVGAAVWMATFIFAKTLRGESLSRSTFLMFSWMQVFTASGFAFSHGSNDIANAIGPFAAILDVLRTGAIEGNAAVPAAAMVTFGVALCAGLWFIGRRVIATVGHNLTTMHPASGFAAELSAAGVVMGATVLGLPVSSTHILIGAVLGVGIVNRSTNWGLMKPIVLAWVITLPSAAILASVGLVALRAIF</sequence>
<proteinExistence type="inferred from homology"/>
<gene>
    <name type="ordered locus">BQ2027_MB2302</name>
</gene>